<sequence length="1551" mass="176431">MCSRGDANAAGAAAARRVTGLCYNMGLLIALALLCLFSLAEANSKAITTSLTTKWFSAPLLLEASEFLAEDSQEKFWSFVEASQNIGSSDQHDTDRSYYDAILEAAFRFLSPLQQNLLKFCLSLRSYSASIQAFQQIAVDEPPPEGCKSFLSVHGKQTCDLGTLESLLLTAPDRPKPLLFKGDHRYPSSNPESPVVIFYSEIGHEEFSNIHHQLISKSNEGKINYVFRHYISNPRKEPVHLSGYGVELAIKSTEYKAKDDTQVKGTEVNTTVIGENDPIDEVQGFLFGKLRELYPSLEGQLKEFRKHLVESTNEMAPLKVWQLQDLSFQTAARILAAPVELALVVMKDISQNFPTKARAITKTAVSAQLRAEVEENQKYFKGTIGLQPGDSALFINGLHIDLDTQDIFSLFDTLRNEARVMEGLHRLGIEGLSLHNILKLNIQPSETDYAVDIRSPAISWVNNLEVDSRYNSWPSSLQELLRPTFPGVIRQIRKNLHNMVFIVDPVHETTAELVSIAEMFLSNHIPLRIGFIFVVNDSEDVDGMQDAGVAVLRAYNYVGQEVDGYHAFQTLTQIYNKVRTGEKVKVEHVVSVLEKKYPYVEVNSILGIDSAYDQNRKEARGYYEQTGVGPLPVVLFNGMPFEKEQLDPDELETITMHKILETTTFFQRAVYLGELSHDQDVVEYIMNQPNVVPRINSRILTAKREYLDLTASNNFYVDDFARFSALDSRGKTAAIANSMNYLTKKGMSSKEIYDDSFIRPVTFWIVGDFDSPSGRQLLYDAIKHQKTSNNVRISMINNPSREISDSSTPVSRAIWAALQTQTSNSAKNFITKMVKEETAEALAAGVDIGEFSVGGMDVSLFKEVFESSRMDFILSHALYCRDVLKLKKGQRVVISNGRIIGPLEDSELFNQDDFHLLENIILKTSGQKIKSHIQQLRVEEDVASDLVMKVDALLSAQPKGEARIEYQFFEDKHSAIKLKPKEGETYYDVVAVVDPVTREAQRLAPLLLVLAQLINMSLRVFMNCQSKLSDMPLKSFYRYVLEPEISFTADNSFAKGPIAKFLDMPQSPLFTLNLNTPESWMVESVRTPYDLDNIYLEEVDSIVAAEYELEYLLLEGHCYDITTGQPPRGLQFTLGTSANPTTVDTIVMANLGYFQLKANPGAWILRLRKGRSDDIYRIYSHDGTDSPPDANDVVVILNNFKSKIIKVKVQKKADMANEDLLSDGTNENESGFWDSFKWGFSGQKTEEVKQDKDDIINIFSVASGHLYERFLRIMMLSVLKNTKTPVKFWFLKNYLSPTFKEFIPYMAKKYNFQYELVQYKWPRWLHQQTEKQRIIWGYKILFLDVLFPLVVDKFLFVDADQIVRTDLKELRDFNLDGAPYGYTPFCDSRREMDGYRFWKSGYWASHLAGRKYHISALYVVDLKKFRKIAAGDRLRGQYQGLSQDPNSLSNLDQDLPNNMIHQVPIKSLPQEWLWCETWCDDASKKRAKTIDLCNNPMTKEPKLEAAVRIVPEWQDYDQEIKQLQTLFQEEKELGTLHEEETQEGSQKHEEL</sequence>
<feature type="signal peptide" evidence="5">
    <location>
        <begin position="1"/>
        <end position="42"/>
    </location>
</feature>
<feature type="chain" id="PRO_0000012273" description="UDP-glucose:glycoprotein glucosyltransferase 1">
    <location>
        <begin position="43"/>
        <end position="1551"/>
    </location>
</feature>
<feature type="region of interest" description="Glucosyltransferase">
    <location>
        <begin position="1244"/>
        <end position="1551"/>
    </location>
</feature>
<feature type="region of interest" description="Disordered" evidence="4">
    <location>
        <begin position="1531"/>
        <end position="1551"/>
    </location>
</feature>
<feature type="short sequence motif" description="Prevents secretion from ER" evidence="3">
    <location>
        <begin position="1548"/>
        <end position="1551"/>
    </location>
</feature>
<feature type="modified residue" description="Phosphoserine" evidence="1">
    <location>
        <position position="1277"/>
    </location>
</feature>
<feature type="glycosylation site" description="N-linked (GlcNAc...) asparagine" evidence="2">
    <location>
        <position position="269"/>
    </location>
</feature>
<feature type="glycosylation site" description="N-linked (GlcNAc...) asparagine" evidence="2">
    <location>
        <position position="536"/>
    </location>
</feature>
<feature type="glycosylation site" description="N-linked (GlcNAc...) asparagine" evidence="2">
    <location>
        <position position="1015"/>
    </location>
</feature>
<feature type="glycosylation site" description="N-linked (GlcNAc...) asparagine" evidence="2">
    <location>
        <position position="1228"/>
    </location>
</feature>
<feature type="mutagenesis site" description="Inactive." evidence="5">
    <original>D</original>
    <variation>A</variation>
    <location>
        <position position="1358"/>
    </location>
</feature>
<feature type="mutagenesis site" description="Inactive." evidence="5">
    <original>D</original>
    <variation>A</variation>
    <location>
        <position position="1360"/>
    </location>
</feature>
<feature type="mutagenesis site" description="Less than 2% activity retained." evidence="5">
    <original>Q</original>
    <variation>A</variation>
    <location>
        <position position="1453"/>
    </location>
</feature>
<feature type="mutagenesis site" description="Less than 15% activity retained." evidence="5">
    <original>N</original>
    <variation>A</variation>
    <location>
        <position position="1457"/>
    </location>
</feature>
<feature type="sequence conflict" description="In Ref. 2; AAF67072." evidence="13" ref="2">
    <original>A</original>
    <variation>C</variation>
    <location>
        <position position="12"/>
    </location>
</feature>
<feature type="sequence conflict" description="In Ref. 2; AA sequence." evidence="13" ref="2">
    <original>S</original>
    <variation>R</variation>
    <location>
        <position position="44"/>
    </location>
</feature>
<feature type="sequence conflict" description="In Ref. 2; AA sequence." evidence="13" ref="2">
    <original>QD</original>
    <variation>MV</variation>
    <location>
        <begin position="324"/>
        <end position="325"/>
    </location>
</feature>
<feature type="sequence conflict" description="In Ref. 2; AA sequence." evidence="13" ref="2">
    <original>F</original>
    <variation>H</variation>
    <location>
        <position position="969"/>
    </location>
</feature>
<feature type="sequence conflict" description="In Ref. 2; AA sequence." evidence="13" ref="2">
    <original>L</original>
    <variation>K</variation>
    <location>
        <position position="1165"/>
    </location>
</feature>
<name>UGGG1_RAT</name>
<accession>Q9JLA3</accession>
<reference key="1">
    <citation type="journal article" date="2004" name="Nature">
        <title>Genome sequence of the Brown Norway rat yields insights into mammalian evolution.</title>
        <authorList>
            <person name="Gibbs R.A."/>
            <person name="Weinstock G.M."/>
            <person name="Metzker M.L."/>
            <person name="Muzny D.M."/>
            <person name="Sodergren E.J."/>
            <person name="Scherer S."/>
            <person name="Scott G."/>
            <person name="Steffen D."/>
            <person name="Worley K.C."/>
            <person name="Burch P.E."/>
            <person name="Okwuonu G."/>
            <person name="Hines S."/>
            <person name="Lewis L."/>
            <person name="Deramo C."/>
            <person name="Delgado O."/>
            <person name="Dugan-Rocha S."/>
            <person name="Miner G."/>
            <person name="Morgan M."/>
            <person name="Hawes A."/>
            <person name="Gill R."/>
            <person name="Holt R.A."/>
            <person name="Adams M.D."/>
            <person name="Amanatides P.G."/>
            <person name="Baden-Tillson H."/>
            <person name="Barnstead M."/>
            <person name="Chin S."/>
            <person name="Evans C.A."/>
            <person name="Ferriera S."/>
            <person name="Fosler C."/>
            <person name="Glodek A."/>
            <person name="Gu Z."/>
            <person name="Jennings D."/>
            <person name="Kraft C.L."/>
            <person name="Nguyen T."/>
            <person name="Pfannkoch C.M."/>
            <person name="Sitter C."/>
            <person name="Sutton G.G."/>
            <person name="Venter J.C."/>
            <person name="Woodage T."/>
            <person name="Smith D."/>
            <person name="Lee H.-M."/>
            <person name="Gustafson E."/>
            <person name="Cahill P."/>
            <person name="Kana A."/>
            <person name="Doucette-Stamm L."/>
            <person name="Weinstock K."/>
            <person name="Fechtel K."/>
            <person name="Weiss R.B."/>
            <person name="Dunn D.M."/>
            <person name="Green E.D."/>
            <person name="Blakesley R.W."/>
            <person name="Bouffard G.G."/>
            <person name="De Jong P.J."/>
            <person name="Osoegawa K."/>
            <person name="Zhu B."/>
            <person name="Marra M."/>
            <person name="Schein J."/>
            <person name="Bosdet I."/>
            <person name="Fjell C."/>
            <person name="Jones S."/>
            <person name="Krzywinski M."/>
            <person name="Mathewson C."/>
            <person name="Siddiqui A."/>
            <person name="Wye N."/>
            <person name="McPherson J."/>
            <person name="Zhao S."/>
            <person name="Fraser C.M."/>
            <person name="Shetty J."/>
            <person name="Shatsman S."/>
            <person name="Geer K."/>
            <person name="Chen Y."/>
            <person name="Abramzon S."/>
            <person name="Nierman W.C."/>
            <person name="Havlak P.H."/>
            <person name="Chen R."/>
            <person name="Durbin K.J."/>
            <person name="Egan A."/>
            <person name="Ren Y."/>
            <person name="Song X.-Z."/>
            <person name="Li B."/>
            <person name="Liu Y."/>
            <person name="Qin X."/>
            <person name="Cawley S."/>
            <person name="Cooney A.J."/>
            <person name="D'Souza L.M."/>
            <person name="Martin K."/>
            <person name="Wu J.Q."/>
            <person name="Gonzalez-Garay M.L."/>
            <person name="Jackson A.R."/>
            <person name="Kalafus K.J."/>
            <person name="McLeod M.P."/>
            <person name="Milosavljevic A."/>
            <person name="Virk D."/>
            <person name="Volkov A."/>
            <person name="Wheeler D.A."/>
            <person name="Zhang Z."/>
            <person name="Bailey J.A."/>
            <person name="Eichler E.E."/>
            <person name="Tuzun E."/>
            <person name="Birney E."/>
            <person name="Mongin E."/>
            <person name="Ureta-Vidal A."/>
            <person name="Woodwark C."/>
            <person name="Zdobnov E."/>
            <person name="Bork P."/>
            <person name="Suyama M."/>
            <person name="Torrents D."/>
            <person name="Alexandersson M."/>
            <person name="Trask B.J."/>
            <person name="Young J.M."/>
            <person name="Huang H."/>
            <person name="Wang H."/>
            <person name="Xing H."/>
            <person name="Daniels S."/>
            <person name="Gietzen D."/>
            <person name="Schmidt J."/>
            <person name="Stevens K."/>
            <person name="Vitt U."/>
            <person name="Wingrove J."/>
            <person name="Camara F."/>
            <person name="Mar Alba M."/>
            <person name="Abril J.F."/>
            <person name="Guigo R."/>
            <person name="Smit A."/>
            <person name="Dubchak I."/>
            <person name="Rubin E.M."/>
            <person name="Couronne O."/>
            <person name="Poliakov A."/>
            <person name="Huebner N."/>
            <person name="Ganten D."/>
            <person name="Goesele C."/>
            <person name="Hummel O."/>
            <person name="Kreitler T."/>
            <person name="Lee Y.-A."/>
            <person name="Monti J."/>
            <person name="Schulz H."/>
            <person name="Zimdahl H."/>
            <person name="Himmelbauer H."/>
            <person name="Lehrach H."/>
            <person name="Jacob H.J."/>
            <person name="Bromberg S."/>
            <person name="Gullings-Handley J."/>
            <person name="Jensen-Seaman M.I."/>
            <person name="Kwitek A.E."/>
            <person name="Lazar J."/>
            <person name="Pasko D."/>
            <person name="Tonellato P.J."/>
            <person name="Twigger S."/>
            <person name="Ponting C.P."/>
            <person name="Duarte J.M."/>
            <person name="Rice S."/>
            <person name="Goodstadt L."/>
            <person name="Beatson S.A."/>
            <person name="Emes R.D."/>
            <person name="Winter E.E."/>
            <person name="Webber C."/>
            <person name="Brandt P."/>
            <person name="Nyakatura G."/>
            <person name="Adetobi M."/>
            <person name="Chiaromonte F."/>
            <person name="Elnitski L."/>
            <person name="Eswara P."/>
            <person name="Hardison R.C."/>
            <person name="Hou M."/>
            <person name="Kolbe D."/>
            <person name="Makova K."/>
            <person name="Miller W."/>
            <person name="Nekrutenko A."/>
            <person name="Riemer C."/>
            <person name="Schwartz S."/>
            <person name="Taylor J."/>
            <person name="Yang S."/>
            <person name="Zhang Y."/>
            <person name="Lindpaintner K."/>
            <person name="Andrews T.D."/>
            <person name="Caccamo M."/>
            <person name="Clamp M."/>
            <person name="Clarke L."/>
            <person name="Curwen V."/>
            <person name="Durbin R.M."/>
            <person name="Eyras E."/>
            <person name="Searle S.M."/>
            <person name="Cooper G.M."/>
            <person name="Batzoglou S."/>
            <person name="Brudno M."/>
            <person name="Sidow A."/>
            <person name="Stone E.A."/>
            <person name="Payseur B.A."/>
            <person name="Bourque G."/>
            <person name="Lopez-Otin C."/>
            <person name="Puente X.S."/>
            <person name="Chakrabarti K."/>
            <person name="Chatterji S."/>
            <person name="Dewey C."/>
            <person name="Pachter L."/>
            <person name="Bray N."/>
            <person name="Yap V.B."/>
            <person name="Caspi A."/>
            <person name="Tesler G."/>
            <person name="Pevzner P.A."/>
            <person name="Haussler D."/>
            <person name="Roskin K.M."/>
            <person name="Baertsch R."/>
            <person name="Clawson H."/>
            <person name="Furey T.S."/>
            <person name="Hinrichs A.S."/>
            <person name="Karolchik D."/>
            <person name="Kent W.J."/>
            <person name="Rosenbloom K.R."/>
            <person name="Trumbower H."/>
            <person name="Weirauch M."/>
            <person name="Cooper D.N."/>
            <person name="Stenson P.D."/>
            <person name="Ma B."/>
            <person name="Brent M."/>
            <person name="Arumugam M."/>
            <person name="Shteynberg D."/>
            <person name="Copley R.R."/>
            <person name="Taylor M.S."/>
            <person name="Riethman H."/>
            <person name="Mudunuri U."/>
            <person name="Peterson J."/>
            <person name="Guyer M."/>
            <person name="Felsenfeld A."/>
            <person name="Old S."/>
            <person name="Mockrin S."/>
            <person name="Collins F.S."/>
        </authorList>
    </citation>
    <scope>NUCLEOTIDE SEQUENCE [LARGE SCALE GENOMIC DNA]</scope>
    <source>
        <strain>Brown Norway</strain>
    </source>
</reference>
<reference evidence="13 14" key="2">
    <citation type="journal article" date="2000" name="Glycobiology">
        <title>Cloning and characterization of mammalian UDP-glucose glycoprotein:glucosyltransferase and the development of a specific substrate for this enzyme.</title>
        <authorList>
            <person name="Tessier D.C."/>
            <person name="Dignard D."/>
            <person name="Zapun A."/>
            <person name="Radominska-Pandya A."/>
            <person name="Parodi A.J."/>
            <person name="Bergeron J.J.M."/>
            <person name="Thomas D.Y."/>
        </authorList>
    </citation>
    <scope>NUCLEOTIDE SEQUENCE [MRNA] OF 12-1551</scope>
    <scope>PROTEIN SEQUENCE OF 43-59; 223-237; 256-267; 293-302; 307-315; 320-328; 440-456; 732-744; 764-776; 779-783; 950-958; 968-972; 1035-1056; 1158-1165; 1170-1179; 1239-1244; 1301-1308; 1314-1319; 1354-1368 AND 1400-1411</scope>
    <scope>FUNCTION</scope>
    <scope>BIOPHYSICOCHEMICAL PROPERTIES</scope>
    <scope>MUTAGENESIS OF ASP-1358; ASP-1360; GLN-1453 AND ASN-1457</scope>
    <source>
        <strain evidence="14">Sprague-Dawley</strain>
        <tissue evidence="14">Liver</tissue>
    </source>
</reference>
<reference key="3">
    <citation type="submission" date="2007-09" db="UniProtKB">
        <authorList>
            <person name="Lubec G."/>
            <person name="Kang S.U."/>
            <person name="Lubec S."/>
        </authorList>
    </citation>
    <scope>PROTEIN SEQUENCE OF 46-54; 950-959; 1028-1034 AND 1273-1283</scope>
    <scope>IDENTIFICATION BY MASS SPECTROMETRY</scope>
    <source>
        <strain>Sprague-Dawley</strain>
        <tissue>Brain</tissue>
    </source>
</reference>
<reference evidence="13" key="4">
    <citation type="journal article" date="2001" name="J. Biol. Chem.">
        <title>Association between the 15-kDa selenoprotein and UDP-glucose:glycoprotein glucosyltransferase in the endoplasmic reticulum of mammalian cells.</title>
        <authorList>
            <person name="Korotkov K.V."/>
            <person name="Kumaraswamy E."/>
            <person name="Zhou Y."/>
            <person name="Hatfield D.L."/>
            <person name="Gladyshev V.N."/>
        </authorList>
    </citation>
    <scope>PROTEIN SEQUENCE OF 55-75; 554-577; 668-691 AND 890-910</scope>
    <scope>INTERACTION WITH SELENOF</scope>
</reference>
<reference evidence="13" key="5">
    <citation type="journal article" date="1992" name="J. Biol. Chem.">
        <title>Purification to apparent homogeneity and partial characterization of rat liver UDP-glucose:glycoprotein glucosyltransferase.</title>
        <authorList>
            <person name="Trombetta S.E."/>
            <person name="Parodi A.J."/>
        </authorList>
    </citation>
    <scope>CATALYTIC ACTIVITY</scope>
    <scope>COFACTOR</scope>
    <scope>BIOPHYSICOCHEMICAL PROPERTIES</scope>
</reference>
<reference key="6">
    <citation type="journal article" date="2001" name="Proc. Natl. Acad. Sci. U.S.A.">
        <title>Immunolocalization of UDP-glucose:glycoprotein glucosyltransferase indicates involvement of pre-Golgi intermediates in protein quality control.</title>
        <authorList>
            <person name="Zuber C."/>
            <person name="Fan J.-Y."/>
            <person name="Guhl B."/>
            <person name="Parodi A."/>
            <person name="Fessler J.H."/>
            <person name="Parker C."/>
            <person name="Roth J."/>
        </authorList>
    </citation>
    <scope>SUBCELLULAR LOCATION</scope>
</reference>
<reference key="7">
    <citation type="journal article" date="2002" name="Mol. Biol. Cell">
        <title>A subset of chaperones and folding enzymes form multiprotein complexes in endoplasmic reticulum to bind nascent proteins.</title>
        <authorList>
            <person name="Meunier L."/>
            <person name="Usherwood Y.-K."/>
            <person name="Chung K.T."/>
            <person name="Hendershot L.M."/>
        </authorList>
    </citation>
    <scope>COMPONENT OF A CHAPERONE COMPLEX</scope>
</reference>
<reference key="8">
    <citation type="journal article" date="2004" name="Nat. Struct. Mol. Biol.">
        <title>The ER protein folding sensor UDP-glucose glycoprotein-glucosyltransferase modifies substrates distant to local changes in glycoprotein conformation.</title>
        <authorList>
            <person name="Taylor S.C."/>
            <person name="Ferguson A.D."/>
            <person name="Bergeron J.J.M."/>
            <person name="Thomas D.Y."/>
        </authorList>
    </citation>
    <scope>FUNCTION</scope>
</reference>
<reference key="9">
    <citation type="journal article" date="2005" name="EMBO J.">
        <title>Minor folding defects trigger local modification of glycoproteins by the ER folding sensor GT.</title>
        <authorList>
            <person name="Ritter C."/>
            <person name="Quirin K."/>
            <person name="Kowarik M."/>
            <person name="Helenius A."/>
        </authorList>
    </citation>
    <scope>FUNCTION</scope>
</reference>
<protein>
    <recommendedName>
        <fullName>UDP-glucose:glycoprotein glucosyltransferase 1</fullName>
        <shortName>UGT1</shortName>
        <shortName>rUGT1</shortName>
        <ecNumber evidence="10">2.4.1.-</ecNumber>
    </recommendedName>
    <alternativeName>
        <fullName>UDP--Glc:glycoprotein glucosyltransferase</fullName>
    </alternativeName>
    <alternativeName>
        <fullName>UDP-glucose ceramide glucosyltransferase-like 1</fullName>
    </alternativeName>
</protein>
<dbReference type="EC" id="2.4.1.-" evidence="10"/>
<dbReference type="EMBL" id="AF200359">
    <property type="protein sequence ID" value="AAF67072.1"/>
    <property type="status" value="ALT_INIT"/>
    <property type="molecule type" value="mRNA"/>
</dbReference>
<dbReference type="RefSeq" id="NP_598280.1">
    <property type="nucleotide sequence ID" value="NM_133596.1"/>
</dbReference>
<dbReference type="RefSeq" id="XP_006244796.1">
    <property type="nucleotide sequence ID" value="XM_006244734.3"/>
</dbReference>
<dbReference type="SMR" id="Q9JLA3"/>
<dbReference type="BioGRID" id="251136">
    <property type="interactions" value="1"/>
</dbReference>
<dbReference type="CORUM" id="Q9JLA3"/>
<dbReference type="FunCoup" id="Q9JLA3">
    <property type="interactions" value="3235"/>
</dbReference>
<dbReference type="IntAct" id="Q9JLA3">
    <property type="interactions" value="3"/>
</dbReference>
<dbReference type="STRING" id="10116.ENSRNOP00000020558"/>
<dbReference type="CAZy" id="GT24">
    <property type="family name" value="Glycosyltransferase Family 24"/>
</dbReference>
<dbReference type="GlyCosmos" id="Q9JLA3">
    <property type="glycosylation" value="4 sites, No reported glycans"/>
</dbReference>
<dbReference type="GlyGen" id="Q9JLA3">
    <property type="glycosylation" value="4 sites"/>
</dbReference>
<dbReference type="iPTMnet" id="Q9JLA3"/>
<dbReference type="PhosphoSitePlus" id="Q9JLA3"/>
<dbReference type="jPOST" id="Q9JLA3"/>
<dbReference type="PaxDb" id="10116-ENSRNOP00000020558"/>
<dbReference type="Ensembl" id="ENSRNOT00000020558.6">
    <property type="protein sequence ID" value="ENSRNOP00000020558.3"/>
    <property type="gene ID" value="ENSRNOG00000014901.6"/>
</dbReference>
<dbReference type="GeneID" id="171129"/>
<dbReference type="KEGG" id="rno:171129"/>
<dbReference type="UCSC" id="RGD:619710">
    <property type="organism name" value="rat"/>
</dbReference>
<dbReference type="AGR" id="RGD:619710"/>
<dbReference type="CTD" id="56886"/>
<dbReference type="RGD" id="619710">
    <property type="gene designation" value="Uggt1"/>
</dbReference>
<dbReference type="eggNOG" id="KOG1879">
    <property type="taxonomic scope" value="Eukaryota"/>
</dbReference>
<dbReference type="GeneTree" id="ENSGT00390000004600"/>
<dbReference type="HOGENOM" id="CLU_002668_1_1_1"/>
<dbReference type="InParanoid" id="Q9JLA3"/>
<dbReference type="PhylomeDB" id="Q9JLA3"/>
<dbReference type="TreeFam" id="TF300320"/>
<dbReference type="UniPathway" id="UPA00378"/>
<dbReference type="PRO" id="PR:Q9JLA3"/>
<dbReference type="Proteomes" id="UP000002494">
    <property type="component" value="Chromosome 9"/>
</dbReference>
<dbReference type="Bgee" id="ENSRNOG00000014901">
    <property type="expression patterns" value="Expressed in liver and 19 other cell types or tissues"/>
</dbReference>
<dbReference type="GO" id="GO:0005783">
    <property type="term" value="C:endoplasmic reticulum"/>
    <property type="evidence" value="ECO:0000266"/>
    <property type="project" value="RGD"/>
</dbReference>
<dbReference type="GO" id="GO:0005788">
    <property type="term" value="C:endoplasmic reticulum lumen"/>
    <property type="evidence" value="ECO:0000314"/>
    <property type="project" value="UniProtKB"/>
</dbReference>
<dbReference type="GO" id="GO:0005793">
    <property type="term" value="C:endoplasmic reticulum-Golgi intermediate compartment"/>
    <property type="evidence" value="ECO:0000314"/>
    <property type="project" value="UniProtKB"/>
</dbReference>
<dbReference type="GO" id="GO:0032991">
    <property type="term" value="C:protein-containing complex"/>
    <property type="evidence" value="ECO:0000266"/>
    <property type="project" value="RGD"/>
</dbReference>
<dbReference type="GO" id="GO:0003980">
    <property type="term" value="F:UDP-glucose:glycoprotein glucosyltransferase activity"/>
    <property type="evidence" value="ECO:0000314"/>
    <property type="project" value="UniProtKB"/>
</dbReference>
<dbReference type="GO" id="GO:0051082">
    <property type="term" value="F:unfolded protein binding"/>
    <property type="evidence" value="ECO:0000314"/>
    <property type="project" value="UniProtKB"/>
</dbReference>
<dbReference type="GO" id="GO:0051084">
    <property type="term" value="P:'de novo' post-translational protein folding"/>
    <property type="evidence" value="ECO:0000304"/>
    <property type="project" value="UniProtKB"/>
</dbReference>
<dbReference type="GO" id="GO:0006457">
    <property type="term" value="P:protein folding"/>
    <property type="evidence" value="ECO:0000304"/>
    <property type="project" value="RGD"/>
</dbReference>
<dbReference type="GO" id="GO:0018279">
    <property type="term" value="P:protein N-linked glycosylation via asparagine"/>
    <property type="evidence" value="ECO:0000318"/>
    <property type="project" value="GO_Central"/>
</dbReference>
<dbReference type="CDD" id="cd06432">
    <property type="entry name" value="GT8_HUGT1_C_like"/>
    <property type="match status" value="1"/>
</dbReference>
<dbReference type="FunFam" id="3.90.550.10:FF:000004">
    <property type="entry name" value="UDP-glucose glycoprotein glucosyltransferase 1"/>
    <property type="match status" value="1"/>
</dbReference>
<dbReference type="Gene3D" id="3.90.550.10">
    <property type="entry name" value="Spore Coat Polysaccharide Biosynthesis Protein SpsA, Chain A"/>
    <property type="match status" value="1"/>
</dbReference>
<dbReference type="InterPro" id="IPR040497">
    <property type="entry name" value="Glyco_transf_24"/>
</dbReference>
<dbReference type="InterPro" id="IPR029044">
    <property type="entry name" value="Nucleotide-diphossugar_trans"/>
</dbReference>
<dbReference type="InterPro" id="IPR009448">
    <property type="entry name" value="UDP-g_GGtrans"/>
</dbReference>
<dbReference type="InterPro" id="IPR040693">
    <property type="entry name" value="UGGT_TRXL_1"/>
</dbReference>
<dbReference type="InterPro" id="IPR040694">
    <property type="entry name" value="UGGT_TRXL_2"/>
</dbReference>
<dbReference type="InterPro" id="IPR040692">
    <property type="entry name" value="UGGT_TRXL_3"/>
</dbReference>
<dbReference type="InterPro" id="IPR040525">
    <property type="entry name" value="UGGT_TRXL_4"/>
</dbReference>
<dbReference type="PANTHER" id="PTHR11226">
    <property type="entry name" value="UDP-GLUCOSE GLYCOPROTEIN:GLUCOSYLTRANSFERASE"/>
    <property type="match status" value="1"/>
</dbReference>
<dbReference type="PANTHER" id="PTHR11226:SF3">
    <property type="entry name" value="UDP-GLUCOSE:GLYCOPROTEIN GLUCOSYLTRANSFERASE 1"/>
    <property type="match status" value="1"/>
</dbReference>
<dbReference type="Pfam" id="PF18404">
    <property type="entry name" value="Glyco_transf_24"/>
    <property type="match status" value="1"/>
</dbReference>
<dbReference type="Pfam" id="PF18400">
    <property type="entry name" value="Thioredoxin_12"/>
    <property type="match status" value="1"/>
</dbReference>
<dbReference type="Pfam" id="PF18401">
    <property type="entry name" value="Thioredoxin_13"/>
    <property type="match status" value="1"/>
</dbReference>
<dbReference type="Pfam" id="PF18402">
    <property type="entry name" value="Thioredoxin_14"/>
    <property type="match status" value="1"/>
</dbReference>
<dbReference type="Pfam" id="PF18403">
    <property type="entry name" value="Thioredoxin_15"/>
    <property type="match status" value="1"/>
</dbReference>
<dbReference type="Pfam" id="PF06427">
    <property type="entry name" value="UDP-g_GGTase"/>
    <property type="match status" value="1"/>
</dbReference>
<dbReference type="SUPFAM" id="SSF53448">
    <property type="entry name" value="Nucleotide-diphospho-sugar transferases"/>
    <property type="match status" value="1"/>
</dbReference>
<dbReference type="PROSITE" id="PS00014">
    <property type="entry name" value="ER_TARGET"/>
    <property type="match status" value="1"/>
</dbReference>
<evidence type="ECO:0000250" key="1">
    <source>
        <dbReference type="UniProtKB" id="Q9NYU2"/>
    </source>
</evidence>
<evidence type="ECO:0000255" key="2"/>
<evidence type="ECO:0000255" key="3">
    <source>
        <dbReference type="PROSITE-ProRule" id="PRU10138"/>
    </source>
</evidence>
<evidence type="ECO:0000256" key="4">
    <source>
        <dbReference type="SAM" id="MobiDB-lite"/>
    </source>
</evidence>
<evidence type="ECO:0000269" key="5">
    <source>
    </source>
</evidence>
<evidence type="ECO:0000269" key="6">
    <source>
    </source>
</evidence>
<evidence type="ECO:0000269" key="7">
    <source>
    </source>
</evidence>
<evidence type="ECO:0000269" key="8">
    <source>
    </source>
</evidence>
<evidence type="ECO:0000269" key="9">
    <source>
    </source>
</evidence>
<evidence type="ECO:0000269" key="10">
    <source>
    </source>
</evidence>
<evidence type="ECO:0000269" key="11">
    <source>
    </source>
</evidence>
<evidence type="ECO:0000303" key="12">
    <source>
    </source>
</evidence>
<evidence type="ECO:0000305" key="13"/>
<evidence type="ECO:0000312" key="14">
    <source>
        <dbReference type="EMBL" id="AAF67072.1"/>
    </source>
</evidence>
<comment type="function">
    <text evidence="5 9 11">Recognizes glycoproteins with minor folding defects. Reglucosylates single N-glycans near the misfolded part of the protein, thus providing quality control for protein folding in the endoplasmic reticulum. Reglucosylated proteins are recognized by calreticulin for recycling to the endoplasmic reticulum and refolding or degradation.</text>
</comment>
<comment type="catalytic activity">
    <reaction evidence="10">
        <text>N(4)-(alpha-D-Man-(1-&gt;2)-alpha-D-Man-(1-&gt;2)-alpha-D-Man-(1-&gt;3)-[alpha-D-Man-(1-&gt;2)-alpha-D-Man-(1-&gt;3)-[alpha-D-Man-(1-&gt;2)-alpha-D-Man-(1-&gt;6)]-alpha-D-Man-(1-&gt;6)]-beta-D-Man-(1-&gt;4)-beta-D-GlcNAc-(1-&gt;4)-beta-D-GlcNAc)-L-asparaginyl-[protein] (N-glucan mannose isomer 9A1,2,3B1,2,3) + UDP-alpha-D-glucose = N(4)-(alpha-D-Glc-(1-&gt;3)-alpha-D-Man-(1-&gt;2)-alpha-D-Man-(1-&gt;2)-alpha-D-Man-(1-&gt;3)-[alpha-D-Man-(1-&gt;2)-alpha-D-Man-(1-&gt;3)-[alpha-D-Man-(1-&gt;2)-alpha-D-Man-(1-&gt;6)]-alpha-D-Man-(1-&gt;6)]-beta-D-Man-(1-&gt;4)-beta-D-GlcNAc-(1-&gt;4)-beta-D-GlcNAc)-L-asparaginyl-[protein] + UDP + H(+)</text>
        <dbReference type="Rhea" id="RHEA:61304"/>
        <dbReference type="Rhea" id="RHEA-COMP:14356"/>
        <dbReference type="Rhea" id="RHEA-COMP:14357"/>
        <dbReference type="ChEBI" id="CHEBI:15378"/>
        <dbReference type="ChEBI" id="CHEBI:58223"/>
        <dbReference type="ChEBI" id="CHEBI:58885"/>
        <dbReference type="ChEBI" id="CHEBI:59080"/>
        <dbReference type="ChEBI" id="CHEBI:139493"/>
    </reaction>
</comment>
<comment type="cofactor">
    <cofactor evidence="10">
        <name>Ca(2+)</name>
        <dbReference type="ChEBI" id="CHEBI:29108"/>
    </cofactor>
</comment>
<comment type="biophysicochemical properties">
    <kinetics>
        <KM evidence="5 10">44 uM for UDP-glucose (in the presence of 0.5 uM denatured acid phosphatase)</KM>
        <Vmax evidence="5 10">34.0 pmol/h/mg enzyme toward UDP-glucose (in the presence of 0.5 uM denatured acid phosphatase)</Vmax>
    </kinetics>
    <phDependence>
        <text evidence="5 10">Optimum pH is 7.6-8.0.</text>
    </phDependence>
</comment>
<comment type="pathway">
    <text evidence="10">Protein modification; protein glycosylation.</text>
</comment>
<comment type="subunit">
    <text evidence="1 6 8">Monomer as well as in a tight complex with SELENOF (PubMed:11278576). Interacts with METTL23 (By similarity). Part of a large chaperone multiprotein complex comprising DNAJB11, HSP90B1, HSPA5, HYOU, PDIA2, PDIA4, PDIA6, PPIB, SDF2L1, UGGT1 and very small amounts of ERP29, but not, or at very low levels, CALR nor CANX (PubMed:12475965).</text>
</comment>
<comment type="subcellular location">
    <subcellularLocation>
        <location evidence="3 7">Endoplasmic reticulum lumen</location>
    </subcellularLocation>
    <subcellularLocation>
        <location evidence="3 7">Endoplasmic reticulum-Golgi intermediate compartment</location>
    </subcellularLocation>
</comment>
<comment type="domain">
    <text>N-terminal non-catalytic domain is assumed to mediate recognition of proteins with partial folding defects.</text>
</comment>
<comment type="similarity">
    <text evidence="5">Belongs to the glycosyltransferase 8 family.</text>
</comment>
<comment type="sequence caution" evidence="13">
    <conflict type="erroneous initiation">
        <sequence resource="EMBL-CDS" id="AAF67072"/>
    </conflict>
</comment>
<proteinExistence type="evidence at protein level"/>
<organism>
    <name type="scientific">Rattus norvegicus</name>
    <name type="common">Rat</name>
    <dbReference type="NCBI Taxonomy" id="10116"/>
    <lineage>
        <taxon>Eukaryota</taxon>
        <taxon>Metazoa</taxon>
        <taxon>Chordata</taxon>
        <taxon>Craniata</taxon>
        <taxon>Vertebrata</taxon>
        <taxon>Euteleostomi</taxon>
        <taxon>Mammalia</taxon>
        <taxon>Eutheria</taxon>
        <taxon>Euarchontoglires</taxon>
        <taxon>Glires</taxon>
        <taxon>Rodentia</taxon>
        <taxon>Myomorpha</taxon>
        <taxon>Muroidea</taxon>
        <taxon>Muridae</taxon>
        <taxon>Murinae</taxon>
        <taxon>Rattus</taxon>
    </lineage>
</organism>
<keyword id="KW-0903">Direct protein sequencing</keyword>
<keyword id="KW-0256">Endoplasmic reticulum</keyword>
<keyword id="KW-0325">Glycoprotein</keyword>
<keyword id="KW-0328">Glycosyltransferase</keyword>
<keyword id="KW-0597">Phosphoprotein</keyword>
<keyword id="KW-1185">Reference proteome</keyword>
<keyword id="KW-0732">Signal</keyword>
<keyword id="KW-0808">Transferase</keyword>
<gene>
    <name type="primary">Uggt1</name>
    <name type="synonym">Gt</name>
    <name type="synonym">Ugcgl1</name>
    <name evidence="14" type="synonym">Uggt</name>
    <name type="synonym">Ugt1</name>
    <name evidence="12" type="synonym">Ugtr</name>
</gene>